<gene>
    <name evidence="3" type="primary">Arp1</name>
    <name type="ORF">MAJ_07524</name>
</gene>
<proteinExistence type="inferred from homology"/>
<dbReference type="EC" id="4.2.1.-" evidence="5"/>
<dbReference type="EMBL" id="AZNE01000049">
    <property type="protein sequence ID" value="KID96468.1"/>
    <property type="molecule type" value="Genomic_DNA"/>
</dbReference>
<dbReference type="RefSeq" id="XP_014575462.1">
    <property type="nucleotide sequence ID" value="XM_014719976.1"/>
</dbReference>
<dbReference type="SMR" id="A0A0B4HM53"/>
<dbReference type="HOGENOM" id="CLU_101889_1_0_1"/>
<dbReference type="OrthoDB" id="5281072at2759"/>
<dbReference type="GO" id="GO:0016829">
    <property type="term" value="F:lyase activity"/>
    <property type="evidence" value="ECO:0007669"/>
    <property type="project" value="UniProtKB-KW"/>
</dbReference>
<dbReference type="Gene3D" id="3.10.450.50">
    <property type="match status" value="1"/>
</dbReference>
<dbReference type="InterPro" id="IPR032710">
    <property type="entry name" value="NTF2-like_dom_sf"/>
</dbReference>
<dbReference type="InterPro" id="IPR049884">
    <property type="entry name" value="Scytalone_dh"/>
</dbReference>
<dbReference type="Pfam" id="PF02982">
    <property type="entry name" value="Scytalone_dh"/>
    <property type="match status" value="1"/>
</dbReference>
<dbReference type="SUPFAM" id="SSF54427">
    <property type="entry name" value="NTF2-like"/>
    <property type="match status" value="1"/>
</dbReference>
<feature type="chain" id="PRO_0000445916" description="Scytalone dehydratase-like protein Arp1">
    <location>
        <begin position="1"/>
        <end position="174"/>
    </location>
</feature>
<feature type="active site" evidence="1">
    <location>
        <position position="84"/>
    </location>
</feature>
<feature type="active site" evidence="1">
    <location>
        <position position="109"/>
    </location>
</feature>
<feature type="binding site" evidence="1">
    <location>
        <position position="49"/>
    </location>
    <ligand>
        <name>substrate</name>
    </ligand>
</feature>
<feature type="binding site" evidence="1">
    <location>
        <position position="130"/>
    </location>
    <ligand>
        <name>substrate</name>
    </ligand>
</feature>
<comment type="function">
    <text evidence="2">Scytalone dehydratase-like protein; part of the Pks2 gene cluster that mediates the formation of infectious structures (appressoria), enabling these fungi to kill insects faster (PubMed:29958281). The product of the Pks2 gene cluster is different from the one of Pks1 and has still not been identified (PubMed:29958281).</text>
</comment>
<comment type="subunit">
    <text evidence="1">Homotrimer. Each subunit contains an active site, located in the central part of the hydrophobic core of the monomer, which functions independently.</text>
</comment>
<comment type="similarity">
    <text evidence="4">Belongs to the scytalone dehydratase family.</text>
</comment>
<organism>
    <name type="scientific">Metarhizium majus (strain ARSEF 297)</name>
    <dbReference type="NCBI Taxonomy" id="1276143"/>
    <lineage>
        <taxon>Eukaryota</taxon>
        <taxon>Fungi</taxon>
        <taxon>Dikarya</taxon>
        <taxon>Ascomycota</taxon>
        <taxon>Pezizomycotina</taxon>
        <taxon>Sordariomycetes</taxon>
        <taxon>Hypocreomycetidae</taxon>
        <taxon>Hypocreales</taxon>
        <taxon>Clavicipitaceae</taxon>
        <taxon>Metarhizium</taxon>
        <taxon>Metarhizium majus</taxon>
    </lineage>
</organism>
<evidence type="ECO:0000250" key="1">
    <source>
        <dbReference type="UniProtKB" id="P56221"/>
    </source>
</evidence>
<evidence type="ECO:0000269" key="2">
    <source>
    </source>
</evidence>
<evidence type="ECO:0000303" key="3">
    <source>
    </source>
</evidence>
<evidence type="ECO:0000305" key="4"/>
<evidence type="ECO:0000305" key="5">
    <source>
    </source>
</evidence>
<accession>A0A0B4HM53</accession>
<protein>
    <recommendedName>
        <fullName evidence="5">Scytalone dehydratase-like protein Arp1</fullName>
        <ecNumber evidence="5">4.2.1.-</ecNumber>
    </recommendedName>
</protein>
<reference key="1">
    <citation type="journal article" date="2014" name="Proc. Natl. Acad. Sci. U.S.A.">
        <title>Trajectory and genomic determinants of fungal-pathogen speciation and host adaptation.</title>
        <authorList>
            <person name="Hu X."/>
            <person name="Xiao G."/>
            <person name="Zheng P."/>
            <person name="Shang Y."/>
            <person name="Su Y."/>
            <person name="Zhang X."/>
            <person name="Liu X."/>
            <person name="Zhan S."/>
            <person name="St Leger R.J."/>
            <person name="Wang C."/>
        </authorList>
    </citation>
    <scope>NUCLEOTIDE SEQUENCE [LARGE SCALE GENOMIC DNA]</scope>
    <source>
        <strain>ARSEF 297</strain>
    </source>
</reference>
<reference key="2">
    <citation type="journal article" date="2018" name="PLoS Genet.">
        <title>Duplication of a Pks gene cluster and subsequent functional diversification facilitate environmental adaptation in Metarhizium species.</title>
        <authorList>
            <person name="Zeng G."/>
            <person name="Zhang P."/>
            <person name="Zhang Q."/>
            <person name="Zhao H."/>
            <person name="Li Z."/>
            <person name="Zhang X."/>
            <person name="Wang C."/>
            <person name="Yin W.B."/>
            <person name="Fang W."/>
        </authorList>
    </citation>
    <scope>IDENTIFICATION</scope>
    <scope>FUNCTION</scope>
</reference>
<keyword id="KW-0456">Lyase</keyword>
<name>ARP1_METMF</name>
<sequence length="174" mass="19752">MAQSLTPSVETDSKTGPSKAISFQDYLDLSALDWARLRAVLAPTLYVDYTKIGKEKWDAMSADDFMAMVSNDDFLGDLCVKTQHLIGATYWERVSESKVIGHHQLRAAHQVYTSPDLKTVKLRGHSHATNEHYYVKSGGVWKFAGLKPEVRWNEYKFEEVFKGSYTQSEKQSLP</sequence>